<feature type="chain" id="PRO_0000200839" description="Uncharacterized protein y4fH">
    <location>
        <begin position="1"/>
        <end position="102"/>
    </location>
</feature>
<geneLocation type="plasmid">
    <name>sym pNGR234a</name>
</geneLocation>
<proteinExistence type="predicted"/>
<protein>
    <recommendedName>
        <fullName>Uncharacterized protein y4fH</fullName>
    </recommendedName>
</protein>
<sequence>MMLYSAQISTYYDFKKRVFQLYYYTGDTAMTSESAAVESAVVIISKASIINKFLAIDAGDHDAESMLASGDFNFAVSRSVRMSCDWCYWLRFLSDFPPFFAQ</sequence>
<accession>P55446</accession>
<name>Y4FH_SINFN</name>
<gene>
    <name type="ordered locus">NGR_a03730</name>
    <name type="ORF">y4fH</name>
</gene>
<organism>
    <name type="scientific">Sinorhizobium fredii (strain NBRC 101917 / NGR234)</name>
    <dbReference type="NCBI Taxonomy" id="394"/>
    <lineage>
        <taxon>Bacteria</taxon>
        <taxon>Pseudomonadati</taxon>
        <taxon>Pseudomonadota</taxon>
        <taxon>Alphaproteobacteria</taxon>
        <taxon>Hyphomicrobiales</taxon>
        <taxon>Rhizobiaceae</taxon>
        <taxon>Sinorhizobium/Ensifer group</taxon>
        <taxon>Sinorhizobium</taxon>
    </lineage>
</organism>
<dbReference type="EMBL" id="U00090">
    <property type="protein sequence ID" value="AAB91665.1"/>
    <property type="molecule type" value="Genomic_DNA"/>
</dbReference>
<dbReference type="RefSeq" id="NP_443853.1">
    <property type="nucleotide sequence ID" value="NC_000914.2"/>
</dbReference>
<dbReference type="RefSeq" id="WP_010875386.1">
    <property type="nucleotide sequence ID" value="NC_000914.2"/>
</dbReference>
<dbReference type="KEGG" id="rhi:NGR_a03730"/>
<dbReference type="HOGENOM" id="CLU_2275219_0_0_5"/>
<dbReference type="OrthoDB" id="10008087at2"/>
<dbReference type="Proteomes" id="UP000001054">
    <property type="component" value="Plasmid pNGR234a"/>
</dbReference>
<reference key="1">
    <citation type="journal article" date="1997" name="Nature">
        <title>Molecular basis of symbiosis between Rhizobium and legumes.</title>
        <authorList>
            <person name="Freiberg C.A."/>
            <person name="Fellay R."/>
            <person name="Bairoch A."/>
            <person name="Broughton W.J."/>
            <person name="Rosenthal A."/>
            <person name="Perret X."/>
        </authorList>
    </citation>
    <scope>NUCLEOTIDE SEQUENCE [LARGE SCALE GENOMIC DNA]</scope>
    <source>
        <strain>NBRC 101917 / NGR234</strain>
    </source>
</reference>
<reference key="2">
    <citation type="journal article" date="2009" name="Appl. Environ. Microbiol.">
        <title>Rhizobium sp. strain NGR234 possesses a remarkable number of secretion systems.</title>
        <authorList>
            <person name="Schmeisser C."/>
            <person name="Liesegang H."/>
            <person name="Krysciak D."/>
            <person name="Bakkou N."/>
            <person name="Le Quere A."/>
            <person name="Wollherr A."/>
            <person name="Heinemeyer I."/>
            <person name="Morgenstern B."/>
            <person name="Pommerening-Roeser A."/>
            <person name="Flores M."/>
            <person name="Palacios R."/>
            <person name="Brenner S."/>
            <person name="Gottschalk G."/>
            <person name="Schmitz R.A."/>
            <person name="Broughton W.J."/>
            <person name="Perret X."/>
            <person name="Strittmatter A.W."/>
            <person name="Streit W.R."/>
        </authorList>
    </citation>
    <scope>NUCLEOTIDE SEQUENCE [LARGE SCALE GENOMIC DNA]</scope>
    <source>
        <strain>NBRC 101917 / NGR234</strain>
    </source>
</reference>
<keyword id="KW-0614">Plasmid</keyword>
<keyword id="KW-1185">Reference proteome</keyword>